<accession>F7E728</accession>
<accession>A4IIY0</accession>
<accession>A7MC32</accession>
<name>SCG3_XENTR</name>
<gene>
    <name type="primary">scg3</name>
</gene>
<comment type="function">
    <text evidence="2 3">Member of the granin protein family that regulates the biogenesis of secretory granules (By similarity). Acts as a sorting receptor for intragranular proteins including chromogranin A/CHGA (By similarity). May also play a role in angiogenesis. Promotes endothelial proliferation, migration and tube formation through MEK/ERK signaling pathway (By similarity).</text>
</comment>
<comment type="subunit">
    <text evidence="1 3">Interacts with CHGA (By similarity). Interacts with secretogranin II/SCG2 (By similarity). Interacts (via C-terminus) with CPE (By similarity).</text>
</comment>
<comment type="subcellular location">
    <subcellularLocation>
        <location evidence="2">Cytoplasmic vesicle</location>
        <location evidence="2">Secretory vesicle</location>
    </subcellularLocation>
    <subcellularLocation>
        <location evidence="2">Cytoplasmic vesicle</location>
        <location evidence="2">Secretory vesicle membrane</location>
        <topology>Peripheral membrane protein</topology>
    </subcellularLocation>
    <subcellularLocation>
        <location evidence="3">Secreted</location>
    </subcellularLocation>
    <text evidence="2">Associated with the secretory granule membrane through direct binding to cholesterol-enriched lipid rafts.</text>
</comment>
<comment type="alternative products">
    <event type="alternative splicing"/>
    <isoform>
        <id>F7E728-1</id>
        <name>1</name>
        <sequence type="displayed"/>
    </isoform>
    <isoform>
        <id>F7E728-2</id>
        <name>2</name>
        <sequence type="described" ref="VSP_043175"/>
    </isoform>
</comment>
<comment type="sequence caution" evidence="7">
    <conflict type="miscellaneous discrepancy">
        <sequence resource="EMBL-CDS" id="AAI36198"/>
    </conflict>
    <text>Contaminating sequence. Potential poly-A sequence.</text>
</comment>
<comment type="sequence caution" evidence="7">
    <conflict type="miscellaneous discrepancy">
        <sequence resource="EMBL-CDS" id="AAI52025"/>
    </conflict>
    <text>Contaminating sequence. Potential poly-A sequence.</text>
</comment>
<protein>
    <recommendedName>
        <fullName>Secretogranin-3</fullName>
    </recommendedName>
    <alternativeName>
        <fullName>Secretogranin III</fullName>
        <shortName>SgIII</shortName>
    </alternativeName>
</protein>
<feature type="signal peptide" evidence="4">
    <location>
        <begin position="1"/>
        <end position="20"/>
    </location>
</feature>
<feature type="chain" id="PRO_0000417024" description="Secretogranin-3">
    <location>
        <begin position="21"/>
        <end position="463"/>
    </location>
</feature>
<feature type="region of interest" description="Disordered" evidence="5">
    <location>
        <begin position="87"/>
        <end position="111"/>
    </location>
</feature>
<feature type="region of interest" description="Disordered" evidence="5">
    <location>
        <begin position="225"/>
        <end position="267"/>
    </location>
</feature>
<feature type="region of interest" description="Disordered" evidence="5">
    <location>
        <begin position="353"/>
        <end position="398"/>
    </location>
</feature>
<feature type="compositionally biased region" description="Basic and acidic residues" evidence="5">
    <location>
        <begin position="102"/>
        <end position="111"/>
    </location>
</feature>
<feature type="compositionally biased region" description="Basic and acidic residues" evidence="5">
    <location>
        <begin position="229"/>
        <end position="262"/>
    </location>
</feature>
<feature type="splice variant" id="VSP_043175" description="In isoform 2." evidence="6">
    <location>
        <position position="353"/>
    </location>
</feature>
<feature type="sequence conflict" description="In Ref. 2; AAI36198." evidence="7" ref="2">
    <original>E</original>
    <variation>G</variation>
    <location>
        <position position="234"/>
    </location>
</feature>
<feature type="sequence conflict" description="In Ref. 2; AAI36198/AAI52025." evidence="7" ref="2">
    <original>DKP</original>
    <variation>KKK</variation>
    <location>
        <begin position="392"/>
        <end position="394"/>
    </location>
</feature>
<evidence type="ECO:0000250" key="1">
    <source>
        <dbReference type="UniProtKB" id="P47867"/>
    </source>
</evidence>
<evidence type="ECO:0000250" key="2">
    <source>
        <dbReference type="UniProtKB" id="P47868"/>
    </source>
</evidence>
<evidence type="ECO:0000250" key="3">
    <source>
        <dbReference type="UniProtKB" id="Q8WXD2"/>
    </source>
</evidence>
<evidence type="ECO:0000255" key="4"/>
<evidence type="ECO:0000256" key="5">
    <source>
        <dbReference type="SAM" id="MobiDB-lite"/>
    </source>
</evidence>
<evidence type="ECO:0000303" key="6">
    <source ref="2"/>
</evidence>
<evidence type="ECO:0000305" key="7"/>
<organism>
    <name type="scientific">Xenopus tropicalis</name>
    <name type="common">Western clawed frog</name>
    <name type="synonym">Silurana tropicalis</name>
    <dbReference type="NCBI Taxonomy" id="8364"/>
    <lineage>
        <taxon>Eukaryota</taxon>
        <taxon>Metazoa</taxon>
        <taxon>Chordata</taxon>
        <taxon>Craniata</taxon>
        <taxon>Vertebrata</taxon>
        <taxon>Euteleostomi</taxon>
        <taxon>Amphibia</taxon>
        <taxon>Batrachia</taxon>
        <taxon>Anura</taxon>
        <taxon>Pipoidea</taxon>
        <taxon>Pipidae</taxon>
        <taxon>Xenopodinae</taxon>
        <taxon>Xenopus</taxon>
        <taxon>Silurana</taxon>
    </lineage>
</organism>
<sequence>MGPKYVFITAIIGVFWHVQGFPNPGIKQDKAVHNRELSEERPLEEQIAEADTVSRGTSKENQEMLKNDSFADELGLLMSVAEKEGDVKRSGSVRSSVGGHRGTLDDADSTKNLKPAEYFDSTKSMLDYKYEDDPDGLHQLDGTPLTAEDIVRKIATRIYEENDRGVFDKIVSKLLNLGLITESQAYTLEDEVAEVLQQLIANEAKNREKEAGDLDYAAVRSDVYDDDKQEGKMETRNKNEDRESSETKNEDSFSSKERRNELSPEEDFDDLQYFPNFNRLIKSLNSENDAKEKKTLITIMKTLIDFVKMMVKYGTITPEEGVNYLENLDAMIAVQAKNKLGKSFGSHKSILSEDKNVDESDSTKQEAAKMEKEYEALKDSTKPEPKDAEDKDKPKGKAETYLEAIRKNIEWLKEHNKEGNKGVSDNDLSKLKDFINQQADSYVEKGILDKEEANVIKRIYSSL</sequence>
<dbReference type="EMBL" id="AAMC01056589">
    <property type="status" value="NOT_ANNOTATED_CDS"/>
    <property type="molecule type" value="Genomic_DNA"/>
</dbReference>
<dbReference type="EMBL" id="AAMC01056590">
    <property type="status" value="NOT_ANNOTATED_CDS"/>
    <property type="molecule type" value="Genomic_DNA"/>
</dbReference>
<dbReference type="EMBL" id="AAMC01056591">
    <property type="status" value="NOT_ANNOTATED_CDS"/>
    <property type="molecule type" value="Genomic_DNA"/>
</dbReference>
<dbReference type="EMBL" id="BC136197">
    <property type="protein sequence ID" value="AAI36198.1"/>
    <property type="status" value="ALT_SEQ"/>
    <property type="molecule type" value="mRNA"/>
</dbReference>
<dbReference type="EMBL" id="BC152024">
    <property type="protein sequence ID" value="AAI52025.1"/>
    <property type="status" value="ALT_SEQ"/>
    <property type="molecule type" value="mRNA"/>
</dbReference>
<dbReference type="RefSeq" id="NP_001263622.1">
    <property type="nucleotide sequence ID" value="NM_001276693.1"/>
</dbReference>
<dbReference type="RefSeq" id="NP_001263623.1">
    <property type="nucleotide sequence ID" value="NM_001276694.1"/>
</dbReference>
<dbReference type="SMR" id="F7E728"/>
<dbReference type="FunCoup" id="F7E728">
    <property type="interactions" value="101"/>
</dbReference>
<dbReference type="STRING" id="8364.ENSXETP00000052912"/>
<dbReference type="PaxDb" id="8364-ENSXETP00000044862"/>
<dbReference type="GeneID" id="100125084"/>
<dbReference type="KEGG" id="xtr:100125084"/>
<dbReference type="AGR" id="Xenbase:XB-GENE-966935"/>
<dbReference type="CTD" id="29106"/>
<dbReference type="Xenbase" id="XB-GENE-966935">
    <property type="gene designation" value="scg3"/>
</dbReference>
<dbReference type="eggNOG" id="ENOG502QUJH">
    <property type="taxonomic scope" value="Eukaryota"/>
</dbReference>
<dbReference type="HOGENOM" id="CLU_031198_1_0_1"/>
<dbReference type="InParanoid" id="F7E728"/>
<dbReference type="OrthoDB" id="9941750at2759"/>
<dbReference type="Reactome" id="R-XTR-114608">
    <property type="pathway name" value="Platelet degranulation"/>
</dbReference>
<dbReference type="Reactome" id="R-XTR-381426">
    <property type="pathway name" value="Regulation of Insulin-like Growth Factor (IGF) transport and uptake by Insulin-like Growth Factor Binding Proteins (IGFBPs)"/>
</dbReference>
<dbReference type="Reactome" id="R-XTR-8957275">
    <property type="pathway name" value="Post-translational protein phosphorylation"/>
</dbReference>
<dbReference type="Proteomes" id="UP000008143">
    <property type="component" value="Chromosome 3"/>
</dbReference>
<dbReference type="GO" id="GO:0005576">
    <property type="term" value="C:extracellular region"/>
    <property type="evidence" value="ECO:0007669"/>
    <property type="project" value="UniProtKB-SubCell"/>
</dbReference>
<dbReference type="GO" id="GO:0030658">
    <property type="term" value="C:transport vesicle membrane"/>
    <property type="evidence" value="ECO:0007669"/>
    <property type="project" value="UniProtKB-SubCell"/>
</dbReference>
<dbReference type="InterPro" id="IPR026197">
    <property type="entry name" value="SCG3"/>
</dbReference>
<dbReference type="PANTHER" id="PTHR17388">
    <property type="entry name" value="SECRETOGRANIN III"/>
    <property type="match status" value="1"/>
</dbReference>
<dbReference type="PANTHER" id="PTHR17388:SF2">
    <property type="entry name" value="SECRETOGRANIN-3"/>
    <property type="match status" value="1"/>
</dbReference>
<dbReference type="Pfam" id="PF15467">
    <property type="entry name" value="SGIII"/>
    <property type="match status" value="1"/>
</dbReference>
<keyword id="KW-0025">Alternative splicing</keyword>
<keyword id="KW-0165">Cleavage on pair of basic residues</keyword>
<keyword id="KW-0968">Cytoplasmic vesicle</keyword>
<keyword id="KW-0472">Membrane</keyword>
<keyword id="KW-1185">Reference proteome</keyword>
<keyword id="KW-0964">Secreted</keyword>
<keyword id="KW-0732">Signal</keyword>
<reference key="1">
    <citation type="journal article" date="2010" name="Science">
        <title>The genome of the Western clawed frog Xenopus tropicalis.</title>
        <authorList>
            <person name="Hellsten U."/>
            <person name="Harland R.M."/>
            <person name="Gilchrist M.J."/>
            <person name="Hendrix D."/>
            <person name="Jurka J."/>
            <person name="Kapitonov V."/>
            <person name="Ovcharenko I."/>
            <person name="Putnam N.H."/>
            <person name="Shu S."/>
            <person name="Taher L."/>
            <person name="Blitz I.L."/>
            <person name="Blumberg B."/>
            <person name="Dichmann D.S."/>
            <person name="Dubchak I."/>
            <person name="Amaya E."/>
            <person name="Detter J.C."/>
            <person name="Fletcher R."/>
            <person name="Gerhard D.S."/>
            <person name="Goodstein D."/>
            <person name="Graves T."/>
            <person name="Grigoriev I.V."/>
            <person name="Grimwood J."/>
            <person name="Kawashima T."/>
            <person name="Lindquist E."/>
            <person name="Lucas S.M."/>
            <person name="Mead P.E."/>
            <person name="Mitros T."/>
            <person name="Ogino H."/>
            <person name="Ohta Y."/>
            <person name="Poliakov A.V."/>
            <person name="Pollet N."/>
            <person name="Robert J."/>
            <person name="Salamov A."/>
            <person name="Sater A.K."/>
            <person name="Schmutz J."/>
            <person name="Terry A."/>
            <person name="Vize P.D."/>
            <person name="Warren W.C."/>
            <person name="Wells D."/>
            <person name="Wills A."/>
            <person name="Wilson R.K."/>
            <person name="Zimmerman L.B."/>
            <person name="Zorn A.M."/>
            <person name="Grainger R."/>
            <person name="Grammer T."/>
            <person name="Khokha M.K."/>
            <person name="Richardson P.M."/>
            <person name="Rokhsar D.S."/>
        </authorList>
    </citation>
    <scope>NUCLEOTIDE SEQUENCE [LARGE SCALE GENOMIC DNA]</scope>
</reference>
<reference key="2">
    <citation type="submission" date="2007-03" db="EMBL/GenBank/DDBJ databases">
        <authorList>
            <consortium name="NIH - Xenopus Gene Collection (XGC) project"/>
        </authorList>
    </citation>
    <scope>NUCLEOTIDE SEQUENCE [LARGE SCALE MRNA] OF 1-395 (ISOFORMS 1 AND 2)</scope>
</reference>
<proteinExistence type="evidence at transcript level"/>